<proteinExistence type="inferred from homology"/>
<keyword id="KW-0963">Cytoplasm</keyword>
<gene>
    <name type="ordered locus">SPT_0802</name>
</gene>
<reference key="1">
    <citation type="journal article" date="2010" name="Genome Biol.">
        <title>Structure and dynamics of the pan-genome of Streptococcus pneumoniae and closely related species.</title>
        <authorList>
            <person name="Donati C."/>
            <person name="Hiller N.L."/>
            <person name="Tettelin H."/>
            <person name="Muzzi A."/>
            <person name="Croucher N.J."/>
            <person name="Angiuoli S.V."/>
            <person name="Oggioni M."/>
            <person name="Dunning Hotopp J.C."/>
            <person name="Hu F.Z."/>
            <person name="Riley D.R."/>
            <person name="Covacci A."/>
            <person name="Mitchell T.J."/>
            <person name="Bentley S.D."/>
            <person name="Kilian M."/>
            <person name="Ehrlich G.D."/>
            <person name="Rappuoli R."/>
            <person name="Moxon E.R."/>
            <person name="Masignani V."/>
        </authorList>
    </citation>
    <scope>NUCLEOTIDE SEQUENCE [LARGE SCALE GENOMIC DNA]</scope>
    <source>
        <strain>Taiwan19F-14</strain>
    </source>
</reference>
<evidence type="ECO:0000255" key="1">
    <source>
        <dbReference type="HAMAP-Rule" id="MF_01103"/>
    </source>
</evidence>
<evidence type="ECO:0000256" key="2">
    <source>
        <dbReference type="SAM" id="MobiDB-lite"/>
    </source>
</evidence>
<organism>
    <name type="scientific">Streptococcus pneumoniae (strain Taiwan19F-14)</name>
    <dbReference type="NCBI Taxonomy" id="487213"/>
    <lineage>
        <taxon>Bacteria</taxon>
        <taxon>Bacillati</taxon>
        <taxon>Bacillota</taxon>
        <taxon>Bacilli</taxon>
        <taxon>Lactobacillales</taxon>
        <taxon>Streptococcaceae</taxon>
        <taxon>Streptococcus</taxon>
    </lineage>
</organism>
<sequence>MDPKKIARINELAKKKKTEGLTPEEKVEQAKLREEYIEGYRRAVRHHIEGIKIVDEEGNDVTPEKLRQVQREKGLHGRSLDDPNS</sequence>
<accession>C1CQP5</accession>
<comment type="subcellular location">
    <subcellularLocation>
        <location evidence="1">Cytoplasm</location>
    </subcellularLocation>
</comment>
<comment type="similarity">
    <text evidence="1">Belongs to the UPF0291 family.</text>
</comment>
<feature type="chain" id="PRO_1000180982" description="UPF0291 protein SPT_0802">
    <location>
        <begin position="1"/>
        <end position="85"/>
    </location>
</feature>
<feature type="region of interest" description="Disordered" evidence="2">
    <location>
        <begin position="62"/>
        <end position="85"/>
    </location>
</feature>
<name>Y802_STRZT</name>
<protein>
    <recommendedName>
        <fullName evidence="1">UPF0291 protein SPT_0802</fullName>
    </recommendedName>
</protein>
<dbReference type="EMBL" id="CP000921">
    <property type="protein sequence ID" value="ACO23700.1"/>
    <property type="molecule type" value="Genomic_DNA"/>
</dbReference>
<dbReference type="RefSeq" id="WP_000371287.1">
    <property type="nucleotide sequence ID" value="NC_012469.1"/>
</dbReference>
<dbReference type="SMR" id="C1CQP5"/>
<dbReference type="KEGG" id="snt:SPT_0802"/>
<dbReference type="HOGENOM" id="CLU_173137_0_2_9"/>
<dbReference type="GO" id="GO:0005737">
    <property type="term" value="C:cytoplasm"/>
    <property type="evidence" value="ECO:0007669"/>
    <property type="project" value="UniProtKB-SubCell"/>
</dbReference>
<dbReference type="Gene3D" id="1.10.287.540">
    <property type="entry name" value="Helix hairpin bin"/>
    <property type="match status" value="1"/>
</dbReference>
<dbReference type="HAMAP" id="MF_01103">
    <property type="entry name" value="UPF0291"/>
    <property type="match status" value="1"/>
</dbReference>
<dbReference type="InterPro" id="IPR009242">
    <property type="entry name" value="DUF896"/>
</dbReference>
<dbReference type="NCBIfam" id="NF002711">
    <property type="entry name" value="PRK02539.1"/>
    <property type="match status" value="1"/>
</dbReference>
<dbReference type="PANTHER" id="PTHR37300">
    <property type="entry name" value="UPF0291 PROTEIN CBO2609/CLC_2481"/>
    <property type="match status" value="1"/>
</dbReference>
<dbReference type="PANTHER" id="PTHR37300:SF1">
    <property type="entry name" value="UPF0291 PROTEIN YNZC"/>
    <property type="match status" value="1"/>
</dbReference>
<dbReference type="Pfam" id="PF05979">
    <property type="entry name" value="DUF896"/>
    <property type="match status" value="1"/>
</dbReference>
<dbReference type="SUPFAM" id="SSF158221">
    <property type="entry name" value="YnzC-like"/>
    <property type="match status" value="1"/>
</dbReference>